<gene>
    <name evidence="1" type="primary">ihfB</name>
    <name evidence="1" type="synonym">himD</name>
    <name type="ordered locus">VCM66_1838</name>
</gene>
<organism>
    <name type="scientific">Vibrio cholerae serotype O1 (strain M66-2)</name>
    <dbReference type="NCBI Taxonomy" id="579112"/>
    <lineage>
        <taxon>Bacteria</taxon>
        <taxon>Pseudomonadati</taxon>
        <taxon>Pseudomonadota</taxon>
        <taxon>Gammaproteobacteria</taxon>
        <taxon>Vibrionales</taxon>
        <taxon>Vibrionaceae</taxon>
        <taxon>Vibrio</taxon>
    </lineage>
</organism>
<comment type="function">
    <text evidence="1">This protein is one of the two subunits of integration host factor, a specific DNA-binding protein that functions in genetic recombination as well as in transcriptional and translational control.</text>
</comment>
<comment type="subunit">
    <text evidence="1">Heterodimer of an alpha and a beta chain.</text>
</comment>
<comment type="similarity">
    <text evidence="1">Belongs to the bacterial histone-like protein family.</text>
</comment>
<dbReference type="EMBL" id="CP001233">
    <property type="protein sequence ID" value="ACP06144.1"/>
    <property type="molecule type" value="Genomic_DNA"/>
</dbReference>
<dbReference type="RefSeq" id="WP_000167341.1">
    <property type="nucleotide sequence ID" value="NC_012578.1"/>
</dbReference>
<dbReference type="SMR" id="C3LNL8"/>
<dbReference type="GeneID" id="94013431"/>
<dbReference type="KEGG" id="vcm:VCM66_1838"/>
<dbReference type="HOGENOM" id="CLU_105066_2_0_6"/>
<dbReference type="Proteomes" id="UP000001217">
    <property type="component" value="Chromosome I"/>
</dbReference>
<dbReference type="GO" id="GO:0005694">
    <property type="term" value="C:chromosome"/>
    <property type="evidence" value="ECO:0007669"/>
    <property type="project" value="InterPro"/>
</dbReference>
<dbReference type="GO" id="GO:0005829">
    <property type="term" value="C:cytosol"/>
    <property type="evidence" value="ECO:0007669"/>
    <property type="project" value="TreeGrafter"/>
</dbReference>
<dbReference type="GO" id="GO:0003677">
    <property type="term" value="F:DNA binding"/>
    <property type="evidence" value="ECO:0007669"/>
    <property type="project" value="UniProtKB-UniRule"/>
</dbReference>
<dbReference type="GO" id="GO:0030527">
    <property type="term" value="F:structural constituent of chromatin"/>
    <property type="evidence" value="ECO:0007669"/>
    <property type="project" value="InterPro"/>
</dbReference>
<dbReference type="GO" id="GO:0006310">
    <property type="term" value="P:DNA recombination"/>
    <property type="evidence" value="ECO:0007669"/>
    <property type="project" value="UniProtKB-UniRule"/>
</dbReference>
<dbReference type="GO" id="GO:0006355">
    <property type="term" value="P:regulation of DNA-templated transcription"/>
    <property type="evidence" value="ECO:0007669"/>
    <property type="project" value="UniProtKB-UniRule"/>
</dbReference>
<dbReference type="GO" id="GO:0006417">
    <property type="term" value="P:regulation of translation"/>
    <property type="evidence" value="ECO:0007669"/>
    <property type="project" value="UniProtKB-UniRule"/>
</dbReference>
<dbReference type="CDD" id="cd13836">
    <property type="entry name" value="IHF_B"/>
    <property type="match status" value="1"/>
</dbReference>
<dbReference type="FunFam" id="4.10.520.10:FF:000003">
    <property type="entry name" value="Integration host factor subunit beta"/>
    <property type="match status" value="1"/>
</dbReference>
<dbReference type="Gene3D" id="4.10.520.10">
    <property type="entry name" value="IHF-like DNA-binding proteins"/>
    <property type="match status" value="1"/>
</dbReference>
<dbReference type="HAMAP" id="MF_00381">
    <property type="entry name" value="IHF_beta"/>
    <property type="match status" value="1"/>
</dbReference>
<dbReference type="InterPro" id="IPR000119">
    <property type="entry name" value="Hist_DNA-bd"/>
</dbReference>
<dbReference type="InterPro" id="IPR020816">
    <property type="entry name" value="Histone-like_DNA-bd_CS"/>
</dbReference>
<dbReference type="InterPro" id="IPR010992">
    <property type="entry name" value="IHF-like_DNA-bd_dom_sf"/>
</dbReference>
<dbReference type="InterPro" id="IPR005685">
    <property type="entry name" value="IHF_beta"/>
</dbReference>
<dbReference type="NCBIfam" id="TIGR00988">
    <property type="entry name" value="hip"/>
    <property type="match status" value="1"/>
</dbReference>
<dbReference type="NCBIfam" id="NF001222">
    <property type="entry name" value="PRK00199.1"/>
    <property type="match status" value="1"/>
</dbReference>
<dbReference type="PANTHER" id="PTHR33175">
    <property type="entry name" value="DNA-BINDING PROTEIN HU"/>
    <property type="match status" value="1"/>
</dbReference>
<dbReference type="PANTHER" id="PTHR33175:SF5">
    <property type="entry name" value="INTEGRATION HOST FACTOR SUBUNIT BETA"/>
    <property type="match status" value="1"/>
</dbReference>
<dbReference type="Pfam" id="PF00216">
    <property type="entry name" value="Bac_DNA_binding"/>
    <property type="match status" value="1"/>
</dbReference>
<dbReference type="PRINTS" id="PR01727">
    <property type="entry name" value="DNABINDINGHU"/>
</dbReference>
<dbReference type="SMART" id="SM00411">
    <property type="entry name" value="BHL"/>
    <property type="match status" value="1"/>
</dbReference>
<dbReference type="SUPFAM" id="SSF47729">
    <property type="entry name" value="IHF-like DNA-binding proteins"/>
    <property type="match status" value="1"/>
</dbReference>
<dbReference type="PROSITE" id="PS00045">
    <property type="entry name" value="HISTONE_LIKE"/>
    <property type="match status" value="1"/>
</dbReference>
<reference key="1">
    <citation type="journal article" date="2008" name="PLoS ONE">
        <title>A recalibrated molecular clock and independent origins for the cholera pandemic clones.</title>
        <authorList>
            <person name="Feng L."/>
            <person name="Reeves P.R."/>
            <person name="Lan R."/>
            <person name="Ren Y."/>
            <person name="Gao C."/>
            <person name="Zhou Z."/>
            <person name="Ren Y."/>
            <person name="Cheng J."/>
            <person name="Wang W."/>
            <person name="Wang J."/>
            <person name="Qian W."/>
            <person name="Li D."/>
            <person name="Wang L."/>
        </authorList>
    </citation>
    <scope>NUCLEOTIDE SEQUENCE [LARGE SCALE GENOMIC DNA]</scope>
    <source>
        <strain>M66-2</strain>
    </source>
</reference>
<name>IHFB_VIBCM</name>
<keyword id="KW-0233">DNA recombination</keyword>
<keyword id="KW-0238">DNA-binding</keyword>
<keyword id="KW-0804">Transcription</keyword>
<keyword id="KW-0805">Transcription regulation</keyword>
<keyword id="KW-0810">Translation regulation</keyword>
<evidence type="ECO:0000255" key="1">
    <source>
        <dbReference type="HAMAP-Rule" id="MF_00381"/>
    </source>
</evidence>
<protein>
    <recommendedName>
        <fullName evidence="1">Integration host factor subunit beta</fullName>
        <shortName evidence="1">IHF-beta</shortName>
    </recommendedName>
</protein>
<sequence>MTKSELIERLCAEQTHLSAKEIEDAVKNILEHMASTLEAGERIEIRGFGSFSLHYREPRVGRNPKTGDKVELEGKYVPHFKPGKELRERVNL</sequence>
<accession>C3LNL8</accession>
<proteinExistence type="inferred from homology"/>
<feature type="chain" id="PRO_1000190450" description="Integration host factor subunit beta">
    <location>
        <begin position="1"/>
        <end position="92"/>
    </location>
</feature>